<sequence length="101" mass="11672">MYISRNMDHWNTFIETLRTAFKEGKEQEFLTLLLTPDERDAVGLRLQIVAQLLDKNVPQREIQQNLSTSAATITRGSNMLKMMDPDFLAWVKEQVDAETQS</sequence>
<keyword id="KW-0963">Cytoplasm</keyword>
<keyword id="KW-0238">DNA-binding</keyword>
<keyword id="KW-1185">Reference proteome</keyword>
<keyword id="KW-0678">Repressor</keyword>
<keyword id="KW-0804">Transcription</keyword>
<keyword id="KW-0805">Transcription regulation</keyword>
<organism>
    <name type="scientific">Actinobacillus succinogenes (strain ATCC 55618 / DSM 22257 / CCUG 43843 / 130Z)</name>
    <dbReference type="NCBI Taxonomy" id="339671"/>
    <lineage>
        <taxon>Bacteria</taxon>
        <taxon>Pseudomonadati</taxon>
        <taxon>Pseudomonadota</taxon>
        <taxon>Gammaproteobacteria</taxon>
        <taxon>Pasteurellales</taxon>
        <taxon>Pasteurellaceae</taxon>
        <taxon>Actinobacillus</taxon>
    </lineage>
</organism>
<name>TRPR_ACTSZ</name>
<accession>A6VPL3</accession>
<comment type="function">
    <text evidence="1">This protein is an aporepressor. When complexed with L-tryptophan it binds the operator region of the trp operon and prevents the initiation of transcription.</text>
</comment>
<comment type="subunit">
    <text evidence="1">Homodimer.</text>
</comment>
<comment type="subcellular location">
    <subcellularLocation>
        <location evidence="1">Cytoplasm</location>
    </subcellularLocation>
</comment>
<comment type="similarity">
    <text evidence="1">Belongs to the TrpR family.</text>
</comment>
<feature type="chain" id="PRO_1000072399" description="Trp operon repressor homolog">
    <location>
        <begin position="1"/>
        <end position="101"/>
    </location>
</feature>
<feature type="DNA-binding region" evidence="1">
    <location>
        <begin position="59"/>
        <end position="82"/>
    </location>
</feature>
<proteinExistence type="inferred from homology"/>
<protein>
    <recommendedName>
        <fullName evidence="1">Trp operon repressor homolog</fullName>
    </recommendedName>
</protein>
<reference key="1">
    <citation type="journal article" date="2010" name="BMC Genomics">
        <title>A genomic perspective on the potential of Actinobacillus succinogenes for industrial succinate production.</title>
        <authorList>
            <person name="McKinlay J.B."/>
            <person name="Laivenieks M."/>
            <person name="Schindler B.D."/>
            <person name="McKinlay A.A."/>
            <person name="Siddaramappa S."/>
            <person name="Challacombe J.F."/>
            <person name="Lowry S.R."/>
            <person name="Clum A."/>
            <person name="Lapidus A.L."/>
            <person name="Burkhart K.B."/>
            <person name="Harkins V."/>
            <person name="Vieille C."/>
        </authorList>
    </citation>
    <scope>NUCLEOTIDE SEQUENCE [LARGE SCALE GENOMIC DNA]</scope>
    <source>
        <strain>ATCC 55618 / DSM 22257 / CCUG 43843 / 130Z</strain>
    </source>
</reference>
<evidence type="ECO:0000255" key="1">
    <source>
        <dbReference type="HAMAP-Rule" id="MF_00475"/>
    </source>
</evidence>
<gene>
    <name evidence="1" type="primary">trpR</name>
    <name type="ordered locus">Asuc_1556</name>
</gene>
<dbReference type="EMBL" id="CP000746">
    <property type="protein sequence ID" value="ABR74910.1"/>
    <property type="molecule type" value="Genomic_DNA"/>
</dbReference>
<dbReference type="RefSeq" id="WP_012073287.1">
    <property type="nucleotide sequence ID" value="NC_009655.1"/>
</dbReference>
<dbReference type="SMR" id="A6VPL3"/>
<dbReference type="STRING" id="339671.Asuc_1556"/>
<dbReference type="KEGG" id="asu:Asuc_1556"/>
<dbReference type="eggNOG" id="COG2973">
    <property type="taxonomic scope" value="Bacteria"/>
</dbReference>
<dbReference type="HOGENOM" id="CLU_147939_0_0_6"/>
<dbReference type="OrthoDB" id="5704033at2"/>
<dbReference type="Proteomes" id="UP000001114">
    <property type="component" value="Chromosome"/>
</dbReference>
<dbReference type="GO" id="GO:0005737">
    <property type="term" value="C:cytoplasm"/>
    <property type="evidence" value="ECO:0007669"/>
    <property type="project" value="UniProtKB-SubCell"/>
</dbReference>
<dbReference type="GO" id="GO:0003700">
    <property type="term" value="F:DNA-binding transcription factor activity"/>
    <property type="evidence" value="ECO:0007669"/>
    <property type="project" value="InterPro"/>
</dbReference>
<dbReference type="GO" id="GO:0043565">
    <property type="term" value="F:sequence-specific DNA binding"/>
    <property type="evidence" value="ECO:0007669"/>
    <property type="project" value="InterPro"/>
</dbReference>
<dbReference type="GO" id="GO:0045892">
    <property type="term" value="P:negative regulation of DNA-templated transcription"/>
    <property type="evidence" value="ECO:0007669"/>
    <property type="project" value="UniProtKB-UniRule"/>
</dbReference>
<dbReference type="Gene3D" id="1.10.1270.10">
    <property type="entry name" value="TrpR-like"/>
    <property type="match status" value="1"/>
</dbReference>
<dbReference type="HAMAP" id="MF_00475">
    <property type="entry name" value="Trp_repressor"/>
    <property type="match status" value="1"/>
</dbReference>
<dbReference type="InterPro" id="IPR000831">
    <property type="entry name" value="Trp_repress"/>
</dbReference>
<dbReference type="InterPro" id="IPR013335">
    <property type="entry name" value="Trp_repress_bac"/>
</dbReference>
<dbReference type="InterPro" id="IPR010921">
    <property type="entry name" value="Trp_repressor/repl_initiator"/>
</dbReference>
<dbReference type="InterPro" id="IPR038116">
    <property type="entry name" value="TrpR-like_sf"/>
</dbReference>
<dbReference type="NCBIfam" id="TIGR01321">
    <property type="entry name" value="TrpR"/>
    <property type="match status" value="1"/>
</dbReference>
<dbReference type="PANTHER" id="PTHR38025">
    <property type="entry name" value="TRP OPERON REPRESSOR"/>
    <property type="match status" value="1"/>
</dbReference>
<dbReference type="PANTHER" id="PTHR38025:SF1">
    <property type="entry name" value="TRP OPERON REPRESSOR"/>
    <property type="match status" value="1"/>
</dbReference>
<dbReference type="Pfam" id="PF01371">
    <property type="entry name" value="Trp_repressor"/>
    <property type="match status" value="1"/>
</dbReference>
<dbReference type="PIRSF" id="PIRSF003196">
    <property type="entry name" value="Trp_repressor"/>
    <property type="match status" value="1"/>
</dbReference>
<dbReference type="SUPFAM" id="SSF48295">
    <property type="entry name" value="TrpR-like"/>
    <property type="match status" value="1"/>
</dbReference>